<reference key="1">
    <citation type="journal article" date="2009" name="PLoS Genet.">
        <title>Organised genome dynamics in the Escherichia coli species results in highly diverse adaptive paths.</title>
        <authorList>
            <person name="Touchon M."/>
            <person name="Hoede C."/>
            <person name="Tenaillon O."/>
            <person name="Barbe V."/>
            <person name="Baeriswyl S."/>
            <person name="Bidet P."/>
            <person name="Bingen E."/>
            <person name="Bonacorsi S."/>
            <person name="Bouchier C."/>
            <person name="Bouvet O."/>
            <person name="Calteau A."/>
            <person name="Chiapello H."/>
            <person name="Clermont O."/>
            <person name="Cruveiller S."/>
            <person name="Danchin A."/>
            <person name="Diard M."/>
            <person name="Dossat C."/>
            <person name="Karoui M.E."/>
            <person name="Frapy E."/>
            <person name="Garry L."/>
            <person name="Ghigo J.M."/>
            <person name="Gilles A.M."/>
            <person name="Johnson J."/>
            <person name="Le Bouguenec C."/>
            <person name="Lescat M."/>
            <person name="Mangenot S."/>
            <person name="Martinez-Jehanne V."/>
            <person name="Matic I."/>
            <person name="Nassif X."/>
            <person name="Oztas S."/>
            <person name="Petit M.A."/>
            <person name="Pichon C."/>
            <person name="Rouy Z."/>
            <person name="Ruf C.S."/>
            <person name="Schneider D."/>
            <person name="Tourret J."/>
            <person name="Vacherie B."/>
            <person name="Vallenet D."/>
            <person name="Medigue C."/>
            <person name="Rocha E.P.C."/>
            <person name="Denamur E."/>
        </authorList>
    </citation>
    <scope>NUCLEOTIDE SEQUENCE [LARGE SCALE GENOMIC DNA]</scope>
    <source>
        <strain>IAI1</strain>
    </source>
</reference>
<organism>
    <name type="scientific">Escherichia coli O8 (strain IAI1)</name>
    <dbReference type="NCBI Taxonomy" id="585034"/>
    <lineage>
        <taxon>Bacteria</taxon>
        <taxon>Pseudomonadati</taxon>
        <taxon>Pseudomonadota</taxon>
        <taxon>Gammaproteobacteria</taxon>
        <taxon>Enterobacterales</taxon>
        <taxon>Enterobacteriaceae</taxon>
        <taxon>Escherichia</taxon>
    </lineage>
</organism>
<sequence length="234" mass="24730">MAKLTKRMRVIREKVDATKQYDINEAIALLKELATAKFVESVDVAVNLGIDARKSDQNVRGATVLPHGTGRSVRVAVFTQGANAEAAKAAGAELVGMEDLADQIKKGEMNFDVVIASPDAMRVVGQLGQVLGPRGLMPNPKVGTVTPNVAEAVKNAKAGQVRYRNDKNGIIHTTIGKVDFDADKLKENLEALLVALKKAKPTQAKGVYIKKVSISTTMGAGVAVDQAGLSASVN</sequence>
<gene>
    <name evidence="1" type="primary">rplA</name>
    <name type="ordered locus">ECIAI1_4198</name>
</gene>
<name>RL1_ECO8A</name>
<protein>
    <recommendedName>
        <fullName evidence="1">Large ribosomal subunit protein uL1</fullName>
    </recommendedName>
    <alternativeName>
        <fullName evidence="2">50S ribosomal protein L1</fullName>
    </alternativeName>
</protein>
<dbReference type="EMBL" id="CU928160">
    <property type="protein sequence ID" value="CAR00957.1"/>
    <property type="molecule type" value="Genomic_DNA"/>
</dbReference>
<dbReference type="RefSeq" id="WP_001096684.1">
    <property type="nucleotide sequence ID" value="NC_011741.1"/>
</dbReference>
<dbReference type="SMR" id="B7M731"/>
<dbReference type="GeneID" id="93777910"/>
<dbReference type="KEGG" id="ecr:ECIAI1_4198"/>
<dbReference type="HOGENOM" id="CLU_062853_0_0_6"/>
<dbReference type="GO" id="GO:0022625">
    <property type="term" value="C:cytosolic large ribosomal subunit"/>
    <property type="evidence" value="ECO:0007669"/>
    <property type="project" value="TreeGrafter"/>
</dbReference>
<dbReference type="GO" id="GO:0019843">
    <property type="term" value="F:rRNA binding"/>
    <property type="evidence" value="ECO:0007669"/>
    <property type="project" value="UniProtKB-UniRule"/>
</dbReference>
<dbReference type="GO" id="GO:0003735">
    <property type="term" value="F:structural constituent of ribosome"/>
    <property type="evidence" value="ECO:0007669"/>
    <property type="project" value="InterPro"/>
</dbReference>
<dbReference type="GO" id="GO:0000049">
    <property type="term" value="F:tRNA binding"/>
    <property type="evidence" value="ECO:0007669"/>
    <property type="project" value="UniProtKB-KW"/>
</dbReference>
<dbReference type="GO" id="GO:0006417">
    <property type="term" value="P:regulation of translation"/>
    <property type="evidence" value="ECO:0007669"/>
    <property type="project" value="UniProtKB-KW"/>
</dbReference>
<dbReference type="GO" id="GO:0006412">
    <property type="term" value="P:translation"/>
    <property type="evidence" value="ECO:0007669"/>
    <property type="project" value="UniProtKB-UniRule"/>
</dbReference>
<dbReference type="CDD" id="cd00403">
    <property type="entry name" value="Ribosomal_L1"/>
    <property type="match status" value="1"/>
</dbReference>
<dbReference type="FunFam" id="3.40.50.790:FF:000001">
    <property type="entry name" value="50S ribosomal protein L1"/>
    <property type="match status" value="1"/>
</dbReference>
<dbReference type="Gene3D" id="3.30.190.20">
    <property type="match status" value="1"/>
</dbReference>
<dbReference type="Gene3D" id="3.40.50.790">
    <property type="match status" value="1"/>
</dbReference>
<dbReference type="HAMAP" id="MF_01318_B">
    <property type="entry name" value="Ribosomal_uL1_B"/>
    <property type="match status" value="1"/>
</dbReference>
<dbReference type="InterPro" id="IPR005878">
    <property type="entry name" value="Ribosom_uL1_bac-type"/>
</dbReference>
<dbReference type="InterPro" id="IPR002143">
    <property type="entry name" value="Ribosomal_uL1"/>
</dbReference>
<dbReference type="InterPro" id="IPR023674">
    <property type="entry name" value="Ribosomal_uL1-like"/>
</dbReference>
<dbReference type="InterPro" id="IPR028364">
    <property type="entry name" value="Ribosomal_uL1/biogenesis"/>
</dbReference>
<dbReference type="InterPro" id="IPR016095">
    <property type="entry name" value="Ribosomal_uL1_3-a/b-sand"/>
</dbReference>
<dbReference type="InterPro" id="IPR023673">
    <property type="entry name" value="Ribosomal_uL1_CS"/>
</dbReference>
<dbReference type="NCBIfam" id="TIGR01169">
    <property type="entry name" value="rplA_bact"/>
    <property type="match status" value="1"/>
</dbReference>
<dbReference type="PANTHER" id="PTHR36427">
    <property type="entry name" value="54S RIBOSOMAL PROTEIN L1, MITOCHONDRIAL"/>
    <property type="match status" value="1"/>
</dbReference>
<dbReference type="PANTHER" id="PTHR36427:SF3">
    <property type="entry name" value="LARGE RIBOSOMAL SUBUNIT PROTEIN UL1M"/>
    <property type="match status" value="1"/>
</dbReference>
<dbReference type="Pfam" id="PF00687">
    <property type="entry name" value="Ribosomal_L1"/>
    <property type="match status" value="1"/>
</dbReference>
<dbReference type="PIRSF" id="PIRSF002155">
    <property type="entry name" value="Ribosomal_L1"/>
    <property type="match status" value="1"/>
</dbReference>
<dbReference type="SUPFAM" id="SSF56808">
    <property type="entry name" value="Ribosomal protein L1"/>
    <property type="match status" value="1"/>
</dbReference>
<dbReference type="PROSITE" id="PS01199">
    <property type="entry name" value="RIBOSOMAL_L1"/>
    <property type="match status" value="1"/>
</dbReference>
<proteinExistence type="inferred from homology"/>
<comment type="function">
    <text evidence="1">Binds directly to 23S rRNA. The L1 stalk is quite mobile in the ribosome, and is involved in E site tRNA release.</text>
</comment>
<comment type="function">
    <text evidence="1">Protein L1 is also a translational repressor protein, it controls the translation of the L11 operon by binding to its mRNA.</text>
</comment>
<comment type="subunit">
    <text evidence="1">Part of the 50S ribosomal subunit.</text>
</comment>
<comment type="similarity">
    <text evidence="1">Belongs to the universal ribosomal protein uL1 family.</text>
</comment>
<evidence type="ECO:0000255" key="1">
    <source>
        <dbReference type="HAMAP-Rule" id="MF_01318"/>
    </source>
</evidence>
<evidence type="ECO:0000305" key="2"/>
<feature type="chain" id="PRO_1000141399" description="Large ribosomal subunit protein uL1">
    <location>
        <begin position="1"/>
        <end position="234"/>
    </location>
</feature>
<keyword id="KW-0678">Repressor</keyword>
<keyword id="KW-0687">Ribonucleoprotein</keyword>
<keyword id="KW-0689">Ribosomal protein</keyword>
<keyword id="KW-0694">RNA-binding</keyword>
<keyword id="KW-0699">rRNA-binding</keyword>
<keyword id="KW-0810">Translation regulation</keyword>
<keyword id="KW-0820">tRNA-binding</keyword>
<accession>B7M731</accession>